<evidence type="ECO:0000255" key="1">
    <source>
        <dbReference type="HAMAP-Rule" id="MF_00698"/>
    </source>
</evidence>
<name>PEPX_LACRH</name>
<accession>Q9RDW6</accession>
<reference key="1">
    <citation type="journal article" date="2000" name="J. Bacteriol.">
        <title>X-prolyl dipeptidyl aminopeptidase gene (pepX) is part of the glnRA operon in Lactobacillus rhamnosus.</title>
        <authorList>
            <person name="Varmanen P."/>
            <person name="Savijoki K."/>
            <person name="Avall S."/>
            <person name="Palva A."/>
            <person name="Tynkkynen S."/>
        </authorList>
    </citation>
    <scope>NUCLEOTIDE SEQUENCE [GENOMIC DNA]</scope>
    <source>
        <strain>1-6</strain>
    </source>
</reference>
<feature type="chain" id="PRO_0000220223" description="Xaa-Pro dipeptidyl-peptidase">
    <location>
        <begin position="1"/>
        <end position="797"/>
    </location>
</feature>
<feature type="active site" description="Charge relay system" evidence="1">
    <location>
        <position position="370"/>
    </location>
</feature>
<feature type="active site" description="Charge relay system" evidence="1">
    <location>
        <position position="490"/>
    </location>
</feature>
<feature type="active site" description="Charge relay system" evidence="1">
    <location>
        <position position="521"/>
    </location>
</feature>
<proteinExistence type="inferred from homology"/>
<dbReference type="EC" id="3.4.14.11" evidence="1"/>
<dbReference type="EMBL" id="AJ224996">
    <property type="protein sequence ID" value="CAB58995.1"/>
    <property type="molecule type" value="Genomic_DNA"/>
</dbReference>
<dbReference type="PIR" id="T46737">
    <property type="entry name" value="T46737"/>
</dbReference>
<dbReference type="SMR" id="Q9RDW6"/>
<dbReference type="STRING" id="47715.AWJ15_03980"/>
<dbReference type="ESTHER" id="lacrh-pepx">
    <property type="family name" value="Lactobacillus_peptidase"/>
</dbReference>
<dbReference type="eggNOG" id="COG2936">
    <property type="taxonomic scope" value="Bacteria"/>
</dbReference>
<dbReference type="GO" id="GO:0005737">
    <property type="term" value="C:cytoplasm"/>
    <property type="evidence" value="ECO:0007669"/>
    <property type="project" value="UniProtKB-SubCell"/>
</dbReference>
<dbReference type="GO" id="GO:0004177">
    <property type="term" value="F:aminopeptidase activity"/>
    <property type="evidence" value="ECO:0007669"/>
    <property type="project" value="UniProtKB-KW"/>
</dbReference>
<dbReference type="GO" id="GO:0008239">
    <property type="term" value="F:dipeptidyl-peptidase activity"/>
    <property type="evidence" value="ECO:0007669"/>
    <property type="project" value="UniProtKB-UniRule"/>
</dbReference>
<dbReference type="GO" id="GO:0008236">
    <property type="term" value="F:serine-type peptidase activity"/>
    <property type="evidence" value="ECO:0007669"/>
    <property type="project" value="UniProtKB-KW"/>
</dbReference>
<dbReference type="GO" id="GO:0006508">
    <property type="term" value="P:proteolysis"/>
    <property type="evidence" value="ECO:0007669"/>
    <property type="project" value="UniProtKB-KW"/>
</dbReference>
<dbReference type="Gene3D" id="1.10.246.70">
    <property type="match status" value="1"/>
</dbReference>
<dbReference type="Gene3D" id="3.40.50.1820">
    <property type="entry name" value="alpha/beta hydrolase"/>
    <property type="match status" value="1"/>
</dbReference>
<dbReference type="Gene3D" id="2.60.120.260">
    <property type="entry name" value="Galactose-binding domain-like"/>
    <property type="match status" value="1"/>
</dbReference>
<dbReference type="HAMAP" id="MF_00698">
    <property type="entry name" value="Aminopeptidase_S15"/>
    <property type="match status" value="1"/>
</dbReference>
<dbReference type="InterPro" id="IPR029058">
    <property type="entry name" value="AB_hydrolase_fold"/>
</dbReference>
<dbReference type="InterPro" id="IPR008979">
    <property type="entry name" value="Galactose-bd-like_sf"/>
</dbReference>
<dbReference type="InterPro" id="IPR008252">
    <property type="entry name" value="Pept_S15_Xpro"/>
</dbReference>
<dbReference type="InterPro" id="IPR015251">
    <property type="entry name" value="PepX_N_dom"/>
</dbReference>
<dbReference type="InterPro" id="IPR036313">
    <property type="entry name" value="PepX_N_dom_sf"/>
</dbReference>
<dbReference type="InterPro" id="IPR000383">
    <property type="entry name" value="Xaa-Pro-like_dom"/>
</dbReference>
<dbReference type="InterPro" id="IPR013736">
    <property type="entry name" value="Xaa-Pro_dipept_C"/>
</dbReference>
<dbReference type="NCBIfam" id="NF003781">
    <property type="entry name" value="PRK05371.1-2"/>
    <property type="match status" value="1"/>
</dbReference>
<dbReference type="Pfam" id="PF02129">
    <property type="entry name" value="Peptidase_S15"/>
    <property type="match status" value="1"/>
</dbReference>
<dbReference type="Pfam" id="PF08530">
    <property type="entry name" value="PepX_C"/>
    <property type="match status" value="1"/>
</dbReference>
<dbReference type="Pfam" id="PF09168">
    <property type="entry name" value="PepX_N"/>
    <property type="match status" value="1"/>
</dbReference>
<dbReference type="PRINTS" id="PR00923">
    <property type="entry name" value="LACTOPTASE"/>
</dbReference>
<dbReference type="SMART" id="SM00939">
    <property type="entry name" value="PepX_C"/>
    <property type="match status" value="1"/>
</dbReference>
<dbReference type="SMART" id="SM00940">
    <property type="entry name" value="PepX_N"/>
    <property type="match status" value="1"/>
</dbReference>
<dbReference type="SUPFAM" id="SSF53474">
    <property type="entry name" value="alpha/beta-Hydrolases"/>
    <property type="match status" value="1"/>
</dbReference>
<dbReference type="SUPFAM" id="SSF49785">
    <property type="entry name" value="Galactose-binding domain-like"/>
    <property type="match status" value="1"/>
</dbReference>
<dbReference type="SUPFAM" id="SSF81761">
    <property type="entry name" value="X-Prolyl dipeptidyl aminopeptidase PepX, N-terminal domain"/>
    <property type="match status" value="1"/>
</dbReference>
<comment type="function">
    <text evidence="1">Removes N-terminal dipeptides sequentially from polypeptides having unsubstituted N-termini provided that the penultimate residue is proline.</text>
</comment>
<comment type="catalytic activity">
    <reaction evidence="1">
        <text>Hydrolyzes Xaa-Pro-|- bonds to release unblocked, N-terminal dipeptides from substrates including Ala-Pro-|-p-nitroanilide and (sequentially) Tyr-Pro-|-Phe-Pro-|-Gly-Pro-|-Ile.</text>
        <dbReference type="EC" id="3.4.14.11"/>
    </reaction>
</comment>
<comment type="subunit">
    <text evidence="1">Homodimer.</text>
</comment>
<comment type="subcellular location">
    <subcellularLocation>
        <location evidence="1">Cytoplasm</location>
    </subcellularLocation>
</comment>
<comment type="similarity">
    <text evidence="1">Belongs to the peptidase S15 family.</text>
</comment>
<sequence>MKLNQFARLTPDIDQQLKELARIGLPADPQAPFADTAAAMYAAFFPEAYQPAAQQDKFAQVAVNSHQNLAEWLATKPTHMKRADFYNVALQLLGFEAFSDFDLSDPISFMTVTKLPSVAHDLLHTADLLQASYLLLTTRTKHLVSFLDDLANRGFFKDFQAQSSQPAHLLFNGKVQQVFDARQAVREVVWIESDVDSDHDGQRDLLEATIYRPKATDRGLKVPVLFTANPYFHGTNDVTAATHVPETVLAVKPHGASKAEVTAAPASKPKLPARPVTGETKQAAAYAEENSPYAFNDYFLARGFAVVYSAGVGTRYSDGFRTIGGPEETDGAVAVIEWLTGKRRAFTNRTDGVAIKAWWSSGKVAMTGKSYLATLAIAGATTGVEGLKTIVADAGISSWYDYYRENGLVVAPGGYQGEDADVLAVDTFSRQKSGGDMIRLKKAWEQHLAQMTRDQDRTTGAYTAWWDARNYRKNAANVKADVVLIHGLNDWNVKPKNAIRFWQAIADLPIQKKLILHQGQHVYVHNVRSLDFLDMMNLWLTHELLGVANQAEQVLPNVLVQDNVTPQTWSAYSDFANPAAEHVTTTANLKTDFESATDQFSDHATATFTAQHDTSASFEKAIITPNSAYVNSRLWLTQPVLEHDRVLEGIPHLELTLAVDAPTGILSVRLVDLGKAKRFEENAATVGASGLQLGFDFKTTDIVEFKPANKETPSKLITLGHINLQNPKNAYEVQTITPGQFFHVSLDLQPTHYHLPAGRQLALIIHGADMAQTIRPTKVTHYQLDLAKSTLTLPFRI</sequence>
<gene>
    <name evidence="1" type="primary">pepX</name>
</gene>
<protein>
    <recommendedName>
        <fullName evidence="1">Xaa-Pro dipeptidyl-peptidase</fullName>
        <ecNumber evidence="1">3.4.14.11</ecNumber>
    </recommendedName>
    <alternativeName>
        <fullName evidence="1">X-Pro dipeptidyl-peptidase</fullName>
    </alternativeName>
    <alternativeName>
        <fullName evidence="1">X-prolyl-dipeptidyl aminopeptidase</fullName>
        <shortName evidence="1">X-PDAP</shortName>
    </alternativeName>
</protein>
<organism>
    <name type="scientific">Lacticaseibacillus rhamnosus</name>
    <name type="common">Lactobacillus rhamnosus</name>
    <dbReference type="NCBI Taxonomy" id="47715"/>
    <lineage>
        <taxon>Bacteria</taxon>
        <taxon>Bacillati</taxon>
        <taxon>Bacillota</taxon>
        <taxon>Bacilli</taxon>
        <taxon>Lactobacillales</taxon>
        <taxon>Lactobacillaceae</taxon>
        <taxon>Lacticaseibacillus</taxon>
    </lineage>
</organism>
<keyword id="KW-0031">Aminopeptidase</keyword>
<keyword id="KW-0963">Cytoplasm</keyword>
<keyword id="KW-0378">Hydrolase</keyword>
<keyword id="KW-0645">Protease</keyword>
<keyword id="KW-0720">Serine protease</keyword>